<keyword id="KW-0030">Aminoacyl-tRNA synthetase</keyword>
<keyword id="KW-0067">ATP-binding</keyword>
<keyword id="KW-0963">Cytoplasm</keyword>
<keyword id="KW-0436">Ligase</keyword>
<keyword id="KW-0547">Nucleotide-binding</keyword>
<keyword id="KW-0648">Protein biosynthesis</keyword>
<keyword id="KW-1185">Reference proteome</keyword>
<proteinExistence type="inferred from homology"/>
<feature type="chain" id="PRO_1000076264" description="Histidine--tRNA ligase">
    <location>
        <begin position="1"/>
        <end position="416"/>
    </location>
</feature>
<organism>
    <name type="scientific">Clostridium kluyveri (strain ATCC 8527 / DSM 555 / NBRC 12016 / NCIMB 10680 / K1)</name>
    <dbReference type="NCBI Taxonomy" id="431943"/>
    <lineage>
        <taxon>Bacteria</taxon>
        <taxon>Bacillati</taxon>
        <taxon>Bacillota</taxon>
        <taxon>Clostridia</taxon>
        <taxon>Eubacteriales</taxon>
        <taxon>Clostridiaceae</taxon>
        <taxon>Clostridium</taxon>
    </lineage>
</organism>
<sequence>MAIQAPKGTKDILPTESYKWHYLEDKFKNIADSYGYREIRTPVFEYTELFQRGVGETTDVVQKEMYTFLDRAGRSLTLKPEGTSPAVRAFVEGSLYNEAQPTKLFYFTPVLRYENVQKGRLREHHQFGIEAFGSREASLDAEVISLAMRIYEELGVDGIELNINSIGCSKCRKEYNDILKTFLSKQYDNICDTCKTRFHKNPMRILDCKEKSCREIVKDAPLMLHHLCDECREHFESLKMYLEGLGIGYKINPLIVRGLDYYSKTVFEIINKNITICGGGRYDYLIEEVGGPKMPAVGFGMGIERTLLTLSENGIEIPKLPYIDLYIGIIGDKARIKALTLTNKLREKNVRCEYDHMNRSVKAEMKYANKINARFTVILGENEIESGIAKFKRMEDGQQFEISLGDLSAILNLTRM</sequence>
<dbReference type="EC" id="6.1.1.21" evidence="1"/>
<dbReference type="EMBL" id="CP000673">
    <property type="protein sequence ID" value="EDK35135.1"/>
    <property type="molecule type" value="Genomic_DNA"/>
</dbReference>
<dbReference type="RefSeq" id="WP_012103470.1">
    <property type="nucleotide sequence ID" value="NC_009706.1"/>
</dbReference>
<dbReference type="SMR" id="A5N1Y9"/>
<dbReference type="STRING" id="431943.CKL_3127"/>
<dbReference type="KEGG" id="ckl:CKL_3127"/>
<dbReference type="eggNOG" id="COG0124">
    <property type="taxonomic scope" value="Bacteria"/>
</dbReference>
<dbReference type="HOGENOM" id="CLU_025113_1_1_9"/>
<dbReference type="Proteomes" id="UP000002411">
    <property type="component" value="Chromosome"/>
</dbReference>
<dbReference type="GO" id="GO:0005737">
    <property type="term" value="C:cytoplasm"/>
    <property type="evidence" value="ECO:0007669"/>
    <property type="project" value="UniProtKB-SubCell"/>
</dbReference>
<dbReference type="GO" id="GO:0005524">
    <property type="term" value="F:ATP binding"/>
    <property type="evidence" value="ECO:0007669"/>
    <property type="project" value="UniProtKB-UniRule"/>
</dbReference>
<dbReference type="GO" id="GO:0140096">
    <property type="term" value="F:catalytic activity, acting on a protein"/>
    <property type="evidence" value="ECO:0007669"/>
    <property type="project" value="UniProtKB-ARBA"/>
</dbReference>
<dbReference type="GO" id="GO:0004821">
    <property type="term" value="F:histidine-tRNA ligase activity"/>
    <property type="evidence" value="ECO:0007669"/>
    <property type="project" value="UniProtKB-UniRule"/>
</dbReference>
<dbReference type="GO" id="GO:0016740">
    <property type="term" value="F:transferase activity"/>
    <property type="evidence" value="ECO:0007669"/>
    <property type="project" value="UniProtKB-ARBA"/>
</dbReference>
<dbReference type="GO" id="GO:0006427">
    <property type="term" value="P:histidyl-tRNA aminoacylation"/>
    <property type="evidence" value="ECO:0007669"/>
    <property type="project" value="UniProtKB-UniRule"/>
</dbReference>
<dbReference type="CDD" id="cd00773">
    <property type="entry name" value="HisRS-like_core"/>
    <property type="match status" value="1"/>
</dbReference>
<dbReference type="CDD" id="cd00859">
    <property type="entry name" value="HisRS_anticodon"/>
    <property type="match status" value="1"/>
</dbReference>
<dbReference type="FunFam" id="3.30.930.10:FF:000005">
    <property type="entry name" value="Histidine--tRNA ligase"/>
    <property type="match status" value="1"/>
</dbReference>
<dbReference type="Gene3D" id="3.40.50.800">
    <property type="entry name" value="Anticodon-binding domain"/>
    <property type="match status" value="1"/>
</dbReference>
<dbReference type="Gene3D" id="3.30.930.10">
    <property type="entry name" value="Bira Bifunctional Protein, Domain 2"/>
    <property type="match status" value="1"/>
</dbReference>
<dbReference type="HAMAP" id="MF_00127">
    <property type="entry name" value="His_tRNA_synth"/>
    <property type="match status" value="1"/>
</dbReference>
<dbReference type="InterPro" id="IPR006195">
    <property type="entry name" value="aa-tRNA-synth_II"/>
</dbReference>
<dbReference type="InterPro" id="IPR045864">
    <property type="entry name" value="aa-tRNA-synth_II/BPL/LPL"/>
</dbReference>
<dbReference type="InterPro" id="IPR004154">
    <property type="entry name" value="Anticodon-bd"/>
</dbReference>
<dbReference type="InterPro" id="IPR036621">
    <property type="entry name" value="Anticodon-bd_dom_sf"/>
</dbReference>
<dbReference type="InterPro" id="IPR015807">
    <property type="entry name" value="His-tRNA-ligase"/>
</dbReference>
<dbReference type="InterPro" id="IPR041715">
    <property type="entry name" value="HisRS-like_core"/>
</dbReference>
<dbReference type="InterPro" id="IPR004516">
    <property type="entry name" value="HisRS/HisZ"/>
</dbReference>
<dbReference type="InterPro" id="IPR033656">
    <property type="entry name" value="HisRS_anticodon"/>
</dbReference>
<dbReference type="NCBIfam" id="TIGR00442">
    <property type="entry name" value="hisS"/>
    <property type="match status" value="1"/>
</dbReference>
<dbReference type="PANTHER" id="PTHR43707:SF1">
    <property type="entry name" value="HISTIDINE--TRNA LIGASE, MITOCHONDRIAL-RELATED"/>
    <property type="match status" value="1"/>
</dbReference>
<dbReference type="PANTHER" id="PTHR43707">
    <property type="entry name" value="HISTIDYL-TRNA SYNTHETASE"/>
    <property type="match status" value="1"/>
</dbReference>
<dbReference type="Pfam" id="PF03129">
    <property type="entry name" value="HGTP_anticodon"/>
    <property type="match status" value="1"/>
</dbReference>
<dbReference type="Pfam" id="PF13393">
    <property type="entry name" value="tRNA-synt_His"/>
    <property type="match status" value="1"/>
</dbReference>
<dbReference type="PIRSF" id="PIRSF001549">
    <property type="entry name" value="His-tRNA_synth"/>
    <property type="match status" value="1"/>
</dbReference>
<dbReference type="SUPFAM" id="SSF52954">
    <property type="entry name" value="Class II aaRS ABD-related"/>
    <property type="match status" value="1"/>
</dbReference>
<dbReference type="SUPFAM" id="SSF55681">
    <property type="entry name" value="Class II aaRS and biotin synthetases"/>
    <property type="match status" value="1"/>
</dbReference>
<dbReference type="PROSITE" id="PS50862">
    <property type="entry name" value="AA_TRNA_LIGASE_II"/>
    <property type="match status" value="1"/>
</dbReference>
<protein>
    <recommendedName>
        <fullName evidence="1">Histidine--tRNA ligase</fullName>
        <ecNumber evidence="1">6.1.1.21</ecNumber>
    </recommendedName>
    <alternativeName>
        <fullName evidence="1">Histidyl-tRNA synthetase</fullName>
        <shortName evidence="1">HisRS</shortName>
    </alternativeName>
</protein>
<gene>
    <name evidence="1" type="primary">hisS</name>
    <name type="ordered locus">CKL_3127</name>
</gene>
<name>SYH_CLOK5</name>
<comment type="catalytic activity">
    <reaction evidence="1">
        <text>tRNA(His) + L-histidine + ATP = L-histidyl-tRNA(His) + AMP + diphosphate + H(+)</text>
        <dbReference type="Rhea" id="RHEA:17313"/>
        <dbReference type="Rhea" id="RHEA-COMP:9665"/>
        <dbReference type="Rhea" id="RHEA-COMP:9689"/>
        <dbReference type="ChEBI" id="CHEBI:15378"/>
        <dbReference type="ChEBI" id="CHEBI:30616"/>
        <dbReference type="ChEBI" id="CHEBI:33019"/>
        <dbReference type="ChEBI" id="CHEBI:57595"/>
        <dbReference type="ChEBI" id="CHEBI:78442"/>
        <dbReference type="ChEBI" id="CHEBI:78527"/>
        <dbReference type="ChEBI" id="CHEBI:456215"/>
        <dbReference type="EC" id="6.1.1.21"/>
    </reaction>
</comment>
<comment type="subunit">
    <text evidence="1">Homodimer.</text>
</comment>
<comment type="subcellular location">
    <subcellularLocation>
        <location evidence="1">Cytoplasm</location>
    </subcellularLocation>
</comment>
<comment type="similarity">
    <text evidence="1">Belongs to the class-II aminoacyl-tRNA synthetase family.</text>
</comment>
<reference key="1">
    <citation type="journal article" date="2008" name="Proc. Natl. Acad. Sci. U.S.A.">
        <title>The genome of Clostridium kluyveri, a strict anaerobe with unique metabolic features.</title>
        <authorList>
            <person name="Seedorf H."/>
            <person name="Fricke W.F."/>
            <person name="Veith B."/>
            <person name="Brueggemann H."/>
            <person name="Liesegang H."/>
            <person name="Strittmatter A."/>
            <person name="Miethke M."/>
            <person name="Buckel W."/>
            <person name="Hinderberger J."/>
            <person name="Li F."/>
            <person name="Hagemeier C."/>
            <person name="Thauer R.K."/>
            <person name="Gottschalk G."/>
        </authorList>
    </citation>
    <scope>NUCLEOTIDE SEQUENCE [LARGE SCALE GENOMIC DNA]</scope>
    <source>
        <strain>ATCC 8527 / DSM 555 / NBRC 12016 / NCIMB 10680 / K1</strain>
    </source>
</reference>
<evidence type="ECO:0000255" key="1">
    <source>
        <dbReference type="HAMAP-Rule" id="MF_00127"/>
    </source>
</evidence>
<accession>A5N1Y9</accession>